<keyword id="KW-0028">Amino-acid biosynthesis</keyword>
<keyword id="KW-0055">Arginine biosynthesis</keyword>
<keyword id="KW-0963">Cytoplasm</keyword>
<keyword id="KW-0521">NADP</keyword>
<keyword id="KW-0560">Oxidoreductase</keyword>
<keyword id="KW-1185">Reference proteome</keyword>
<protein>
    <recommendedName>
        <fullName evidence="1">N-acetyl-gamma-glutamyl-phosphate reductase</fullName>
        <shortName evidence="1">AGPR</shortName>
        <ecNumber evidence="1">1.2.1.38</ecNumber>
    </recommendedName>
    <alternativeName>
        <fullName evidence="1">N-acetyl-glutamate semialdehyde dehydrogenase</fullName>
        <shortName evidence="1">NAGSA dehydrogenase</shortName>
    </alternativeName>
</protein>
<proteinExistence type="inferred from homology"/>
<feature type="chain" id="PRO_1000010975" description="N-acetyl-gamma-glutamyl-phosphate reductase">
    <location>
        <begin position="1"/>
        <end position="343"/>
    </location>
</feature>
<feature type="active site" evidence="1">
    <location>
        <position position="146"/>
    </location>
</feature>
<sequence length="343" mass="34930">MTISVAVSGASGYAGGEVLRLLAGHPDVTIGAITAHSNAGSRLGELQPHLHGLASRILEDTTVENLSGHDVVFLALPHGASADIAAQLPEGTVVIDAGADHRLEDPAAWEKFYGSAHAGTWPYGLPELPGQREKLKGANRIAVPGCYPTSALLALTPGFAGSLLQPDDVVIVAASGTSGAGKAAKVNLIGSEVMGSMSPYGVGGGHRHTPEIEQGLGNAAGEAVTVSFTPTLAPMSRGILTTATAKVKPGVTAAELRSAWEEAYDDEPFVHLLPEGQWPSTKSVQGSNHAVMQVAFDAHTGRVIVTCAIDNLTKGTAGGAVQSMNIALGLAETAGLNLQGVAP</sequence>
<dbReference type="EC" id="1.2.1.38" evidence="1"/>
<dbReference type="EMBL" id="CP000454">
    <property type="protein sequence ID" value="ABK02890.1"/>
    <property type="molecule type" value="Genomic_DNA"/>
</dbReference>
<dbReference type="RefSeq" id="WP_011691356.1">
    <property type="nucleotide sequence ID" value="NC_008541.1"/>
</dbReference>
<dbReference type="SMR" id="A0JV20"/>
<dbReference type="STRING" id="290399.Arth_1496"/>
<dbReference type="KEGG" id="art:Arth_1496"/>
<dbReference type="eggNOG" id="COG0002">
    <property type="taxonomic scope" value="Bacteria"/>
</dbReference>
<dbReference type="HOGENOM" id="CLU_006384_0_0_11"/>
<dbReference type="OrthoDB" id="9801289at2"/>
<dbReference type="UniPathway" id="UPA00068">
    <property type="reaction ID" value="UER00108"/>
</dbReference>
<dbReference type="Proteomes" id="UP000000754">
    <property type="component" value="Chromosome"/>
</dbReference>
<dbReference type="GO" id="GO:0005737">
    <property type="term" value="C:cytoplasm"/>
    <property type="evidence" value="ECO:0007669"/>
    <property type="project" value="UniProtKB-SubCell"/>
</dbReference>
<dbReference type="GO" id="GO:0003942">
    <property type="term" value="F:N-acetyl-gamma-glutamyl-phosphate reductase activity"/>
    <property type="evidence" value="ECO:0007669"/>
    <property type="project" value="UniProtKB-UniRule"/>
</dbReference>
<dbReference type="GO" id="GO:0051287">
    <property type="term" value="F:NAD binding"/>
    <property type="evidence" value="ECO:0007669"/>
    <property type="project" value="InterPro"/>
</dbReference>
<dbReference type="GO" id="GO:0070401">
    <property type="term" value="F:NADP+ binding"/>
    <property type="evidence" value="ECO:0007669"/>
    <property type="project" value="InterPro"/>
</dbReference>
<dbReference type="GO" id="GO:0006526">
    <property type="term" value="P:L-arginine biosynthetic process"/>
    <property type="evidence" value="ECO:0007669"/>
    <property type="project" value="UniProtKB-UniRule"/>
</dbReference>
<dbReference type="CDD" id="cd24148">
    <property type="entry name" value="AGPR_1_actinobacAGPR_like"/>
    <property type="match status" value="1"/>
</dbReference>
<dbReference type="CDD" id="cd23934">
    <property type="entry name" value="AGPR_1_C"/>
    <property type="match status" value="1"/>
</dbReference>
<dbReference type="FunFam" id="3.30.360.10:FF:000014">
    <property type="entry name" value="N-acetyl-gamma-glutamyl-phosphate reductase"/>
    <property type="match status" value="1"/>
</dbReference>
<dbReference type="Gene3D" id="3.30.360.10">
    <property type="entry name" value="Dihydrodipicolinate Reductase, domain 2"/>
    <property type="match status" value="1"/>
</dbReference>
<dbReference type="Gene3D" id="3.40.50.720">
    <property type="entry name" value="NAD(P)-binding Rossmann-like Domain"/>
    <property type="match status" value="1"/>
</dbReference>
<dbReference type="HAMAP" id="MF_00150">
    <property type="entry name" value="ArgC_type1"/>
    <property type="match status" value="1"/>
</dbReference>
<dbReference type="InterPro" id="IPR023013">
    <property type="entry name" value="AGPR_AS"/>
</dbReference>
<dbReference type="InterPro" id="IPR000706">
    <property type="entry name" value="AGPR_type-1"/>
</dbReference>
<dbReference type="InterPro" id="IPR036291">
    <property type="entry name" value="NAD(P)-bd_dom_sf"/>
</dbReference>
<dbReference type="InterPro" id="IPR050085">
    <property type="entry name" value="NAGSA_dehydrogenase"/>
</dbReference>
<dbReference type="InterPro" id="IPR000534">
    <property type="entry name" value="Semialdehyde_DH_NAD-bd"/>
</dbReference>
<dbReference type="NCBIfam" id="TIGR01850">
    <property type="entry name" value="argC"/>
    <property type="match status" value="1"/>
</dbReference>
<dbReference type="PANTHER" id="PTHR32338:SF10">
    <property type="entry name" value="N-ACETYL-GAMMA-GLUTAMYL-PHOSPHATE REDUCTASE, CHLOROPLASTIC-RELATED"/>
    <property type="match status" value="1"/>
</dbReference>
<dbReference type="PANTHER" id="PTHR32338">
    <property type="entry name" value="N-ACETYL-GAMMA-GLUTAMYL-PHOSPHATE REDUCTASE, CHLOROPLASTIC-RELATED-RELATED"/>
    <property type="match status" value="1"/>
</dbReference>
<dbReference type="Pfam" id="PF01118">
    <property type="entry name" value="Semialdhyde_dh"/>
    <property type="match status" value="1"/>
</dbReference>
<dbReference type="Pfam" id="PF22698">
    <property type="entry name" value="Semialdhyde_dhC_1"/>
    <property type="match status" value="1"/>
</dbReference>
<dbReference type="SMART" id="SM00859">
    <property type="entry name" value="Semialdhyde_dh"/>
    <property type="match status" value="1"/>
</dbReference>
<dbReference type="SUPFAM" id="SSF55347">
    <property type="entry name" value="Glyceraldehyde-3-phosphate dehydrogenase-like, C-terminal domain"/>
    <property type="match status" value="1"/>
</dbReference>
<dbReference type="SUPFAM" id="SSF51735">
    <property type="entry name" value="NAD(P)-binding Rossmann-fold domains"/>
    <property type="match status" value="1"/>
</dbReference>
<dbReference type="PROSITE" id="PS01224">
    <property type="entry name" value="ARGC"/>
    <property type="match status" value="1"/>
</dbReference>
<name>ARGC_ARTS2</name>
<organism>
    <name type="scientific">Arthrobacter sp. (strain FB24)</name>
    <dbReference type="NCBI Taxonomy" id="290399"/>
    <lineage>
        <taxon>Bacteria</taxon>
        <taxon>Bacillati</taxon>
        <taxon>Actinomycetota</taxon>
        <taxon>Actinomycetes</taxon>
        <taxon>Micrococcales</taxon>
        <taxon>Micrococcaceae</taxon>
        <taxon>Arthrobacter</taxon>
    </lineage>
</organism>
<gene>
    <name evidence="1" type="primary">argC</name>
    <name type="ordered locus">Arth_1496</name>
</gene>
<evidence type="ECO:0000255" key="1">
    <source>
        <dbReference type="HAMAP-Rule" id="MF_00150"/>
    </source>
</evidence>
<comment type="function">
    <text evidence="1">Catalyzes the NADPH-dependent reduction of N-acetyl-5-glutamyl phosphate to yield N-acetyl-L-glutamate 5-semialdehyde.</text>
</comment>
<comment type="catalytic activity">
    <reaction evidence="1">
        <text>N-acetyl-L-glutamate 5-semialdehyde + phosphate + NADP(+) = N-acetyl-L-glutamyl 5-phosphate + NADPH + H(+)</text>
        <dbReference type="Rhea" id="RHEA:21588"/>
        <dbReference type="ChEBI" id="CHEBI:15378"/>
        <dbReference type="ChEBI" id="CHEBI:29123"/>
        <dbReference type="ChEBI" id="CHEBI:43474"/>
        <dbReference type="ChEBI" id="CHEBI:57783"/>
        <dbReference type="ChEBI" id="CHEBI:57936"/>
        <dbReference type="ChEBI" id="CHEBI:58349"/>
        <dbReference type="EC" id="1.2.1.38"/>
    </reaction>
</comment>
<comment type="pathway">
    <text evidence="1">Amino-acid biosynthesis; L-arginine biosynthesis; N(2)-acetyl-L-ornithine from L-glutamate: step 3/4.</text>
</comment>
<comment type="subcellular location">
    <subcellularLocation>
        <location evidence="1">Cytoplasm</location>
    </subcellularLocation>
</comment>
<comment type="similarity">
    <text evidence="1">Belongs to the NAGSA dehydrogenase family. Type 1 subfamily.</text>
</comment>
<reference key="1">
    <citation type="journal article" date="2013" name="Stand. Genomic Sci.">
        <title>Complete genome sequence of Arthrobacter sp. strain FB24.</title>
        <authorList>
            <person name="Nakatsu C.H."/>
            <person name="Barabote R."/>
            <person name="Thompson S."/>
            <person name="Bruce D."/>
            <person name="Detter C."/>
            <person name="Brettin T."/>
            <person name="Han C."/>
            <person name="Beasley F."/>
            <person name="Chen W."/>
            <person name="Konopka A."/>
            <person name="Xie G."/>
        </authorList>
    </citation>
    <scope>NUCLEOTIDE SEQUENCE [LARGE SCALE GENOMIC DNA]</scope>
    <source>
        <strain>FB24</strain>
    </source>
</reference>
<accession>A0JV20</accession>